<gene>
    <name evidence="1" type="primary">rpmD</name>
    <name type="ordered locus">swp_2029</name>
</gene>
<proteinExistence type="inferred from homology"/>
<protein>
    <recommendedName>
        <fullName evidence="1">Large ribosomal subunit protein uL30</fullName>
    </recommendedName>
    <alternativeName>
        <fullName evidence="2">50S ribosomal protein L30</fullName>
    </alternativeName>
</protein>
<dbReference type="EMBL" id="CP000472">
    <property type="protein sequence ID" value="ACJ28785.1"/>
    <property type="molecule type" value="Genomic_DNA"/>
</dbReference>
<dbReference type="RefSeq" id="WP_020912153.1">
    <property type="nucleotide sequence ID" value="NC_011566.1"/>
</dbReference>
<dbReference type="SMR" id="B8CNF1"/>
<dbReference type="STRING" id="225849.swp_2029"/>
<dbReference type="KEGG" id="swp:swp_2029"/>
<dbReference type="eggNOG" id="COG1841">
    <property type="taxonomic scope" value="Bacteria"/>
</dbReference>
<dbReference type="HOGENOM" id="CLU_131047_1_4_6"/>
<dbReference type="OrthoDB" id="9812790at2"/>
<dbReference type="Proteomes" id="UP000000753">
    <property type="component" value="Chromosome"/>
</dbReference>
<dbReference type="GO" id="GO:0022625">
    <property type="term" value="C:cytosolic large ribosomal subunit"/>
    <property type="evidence" value="ECO:0007669"/>
    <property type="project" value="TreeGrafter"/>
</dbReference>
<dbReference type="GO" id="GO:0003735">
    <property type="term" value="F:structural constituent of ribosome"/>
    <property type="evidence" value="ECO:0007669"/>
    <property type="project" value="InterPro"/>
</dbReference>
<dbReference type="GO" id="GO:0006412">
    <property type="term" value="P:translation"/>
    <property type="evidence" value="ECO:0007669"/>
    <property type="project" value="UniProtKB-UniRule"/>
</dbReference>
<dbReference type="CDD" id="cd01658">
    <property type="entry name" value="Ribosomal_L30"/>
    <property type="match status" value="1"/>
</dbReference>
<dbReference type="FunFam" id="3.30.1390.20:FF:000001">
    <property type="entry name" value="50S ribosomal protein L30"/>
    <property type="match status" value="1"/>
</dbReference>
<dbReference type="Gene3D" id="3.30.1390.20">
    <property type="entry name" value="Ribosomal protein L30, ferredoxin-like fold domain"/>
    <property type="match status" value="1"/>
</dbReference>
<dbReference type="HAMAP" id="MF_01371_B">
    <property type="entry name" value="Ribosomal_uL30_B"/>
    <property type="match status" value="1"/>
</dbReference>
<dbReference type="InterPro" id="IPR036919">
    <property type="entry name" value="Ribo_uL30_ferredoxin-like_sf"/>
</dbReference>
<dbReference type="InterPro" id="IPR005996">
    <property type="entry name" value="Ribosomal_uL30_bac-type"/>
</dbReference>
<dbReference type="InterPro" id="IPR018038">
    <property type="entry name" value="Ribosomal_uL30_CS"/>
</dbReference>
<dbReference type="InterPro" id="IPR016082">
    <property type="entry name" value="Ribosomal_uL30_ferredoxin-like"/>
</dbReference>
<dbReference type="NCBIfam" id="TIGR01308">
    <property type="entry name" value="rpmD_bact"/>
    <property type="match status" value="1"/>
</dbReference>
<dbReference type="PANTHER" id="PTHR15892:SF2">
    <property type="entry name" value="LARGE RIBOSOMAL SUBUNIT PROTEIN UL30M"/>
    <property type="match status" value="1"/>
</dbReference>
<dbReference type="PANTHER" id="PTHR15892">
    <property type="entry name" value="MITOCHONDRIAL RIBOSOMAL PROTEIN L30"/>
    <property type="match status" value="1"/>
</dbReference>
<dbReference type="Pfam" id="PF00327">
    <property type="entry name" value="Ribosomal_L30"/>
    <property type="match status" value="1"/>
</dbReference>
<dbReference type="PIRSF" id="PIRSF002211">
    <property type="entry name" value="Ribosomal_L30_bac-type"/>
    <property type="match status" value="1"/>
</dbReference>
<dbReference type="SUPFAM" id="SSF55129">
    <property type="entry name" value="Ribosomal protein L30p/L7e"/>
    <property type="match status" value="1"/>
</dbReference>
<dbReference type="PROSITE" id="PS00634">
    <property type="entry name" value="RIBOSOMAL_L30"/>
    <property type="match status" value="1"/>
</dbReference>
<reference key="1">
    <citation type="journal article" date="2008" name="PLoS ONE">
        <title>Environmental adaptation: genomic analysis of the piezotolerant and psychrotolerant deep-sea iron reducing bacterium Shewanella piezotolerans WP3.</title>
        <authorList>
            <person name="Wang F."/>
            <person name="Wang J."/>
            <person name="Jian H."/>
            <person name="Zhang B."/>
            <person name="Li S."/>
            <person name="Wang F."/>
            <person name="Zeng X."/>
            <person name="Gao L."/>
            <person name="Bartlett D.H."/>
            <person name="Yu J."/>
            <person name="Hu S."/>
            <person name="Xiao X."/>
        </authorList>
    </citation>
    <scope>NUCLEOTIDE SEQUENCE [LARGE SCALE GENOMIC DNA]</scope>
    <source>
        <strain>WP3 / JCM 13877</strain>
    </source>
</reference>
<accession>B8CNF1</accession>
<sequence length="61" mass="6856">MATKTLKVTQTKSSIGRLPKHRATLTGLGLRRINHTVELEDTPSVRGMINKVYYMVSVEEV</sequence>
<organism>
    <name type="scientific">Shewanella piezotolerans (strain WP3 / JCM 13877)</name>
    <dbReference type="NCBI Taxonomy" id="225849"/>
    <lineage>
        <taxon>Bacteria</taxon>
        <taxon>Pseudomonadati</taxon>
        <taxon>Pseudomonadota</taxon>
        <taxon>Gammaproteobacteria</taxon>
        <taxon>Alteromonadales</taxon>
        <taxon>Shewanellaceae</taxon>
        <taxon>Shewanella</taxon>
    </lineage>
</organism>
<comment type="subunit">
    <text evidence="1">Part of the 50S ribosomal subunit.</text>
</comment>
<comment type="similarity">
    <text evidence="1">Belongs to the universal ribosomal protein uL30 family.</text>
</comment>
<name>RL30_SHEPW</name>
<keyword id="KW-0687">Ribonucleoprotein</keyword>
<keyword id="KW-0689">Ribosomal protein</keyword>
<feature type="chain" id="PRO_1000144718" description="Large ribosomal subunit protein uL30">
    <location>
        <begin position="1"/>
        <end position="61"/>
    </location>
</feature>
<evidence type="ECO:0000255" key="1">
    <source>
        <dbReference type="HAMAP-Rule" id="MF_01371"/>
    </source>
</evidence>
<evidence type="ECO:0000305" key="2"/>